<name>F16PA_GEOSL</name>
<protein>
    <recommendedName>
        <fullName evidence="1">Fructose-1,6-bisphosphatase class 1</fullName>
        <shortName evidence="1">FBPase class 1</shortName>
        <ecNumber evidence="1">3.1.3.11</ecNumber>
    </recommendedName>
    <alternativeName>
        <fullName evidence="1">D-fructose-1,6-bisphosphate 1-phosphohydrolase class 1</fullName>
    </alternativeName>
</protein>
<sequence length="313" mass="34333">MPFSEPGKTKFQVDLRRHLRNQDISDNLVHLICEIAEASKYVINAVRTGDLGVAGTSNLYGEEQLALDVLSDRIIRKRLIHSGVVCNIASEEMDEIFQAQADADGLYSVAYDPLDGSSLVDVNLAVGTIVSIYEGCNLLQKGRNQVAAMYILYGPRVSLVYSVGKGVHEFTMNHLMEYTLSRENVTMKPDGDIYSPGGLRKKYLPETEKFVQHLESKGSKLRYSGGFVPDINQVLMKGKGIFMYPALNGSPNGKLRVLFELNPMAYLIENAGGAATDGKTPILDIEPQSLDQRAPIFIGCSNDVATAMEFMGG</sequence>
<gene>
    <name evidence="1" type="primary">fbp</name>
    <name type="ordered locus">GSU1651</name>
</gene>
<keyword id="KW-0119">Carbohydrate metabolism</keyword>
<keyword id="KW-0963">Cytoplasm</keyword>
<keyword id="KW-0378">Hydrolase</keyword>
<keyword id="KW-0460">Magnesium</keyword>
<keyword id="KW-0479">Metal-binding</keyword>
<keyword id="KW-1185">Reference proteome</keyword>
<accession>Q74CM2</accession>
<dbReference type="EC" id="3.1.3.11" evidence="1"/>
<dbReference type="EMBL" id="AE017180">
    <property type="protein sequence ID" value="AAR35025.1"/>
    <property type="molecule type" value="Genomic_DNA"/>
</dbReference>
<dbReference type="RefSeq" id="NP_952702.1">
    <property type="nucleotide sequence ID" value="NC_002939.5"/>
</dbReference>
<dbReference type="RefSeq" id="WP_010942295.1">
    <property type="nucleotide sequence ID" value="NC_002939.5"/>
</dbReference>
<dbReference type="SMR" id="Q74CM2"/>
<dbReference type="FunCoup" id="Q74CM2">
    <property type="interactions" value="422"/>
</dbReference>
<dbReference type="STRING" id="243231.GSU1651"/>
<dbReference type="EnsemblBacteria" id="AAR35025">
    <property type="protein sequence ID" value="AAR35025"/>
    <property type="gene ID" value="GSU1651"/>
</dbReference>
<dbReference type="KEGG" id="gsu:GSU1651"/>
<dbReference type="PATRIC" id="fig|243231.5.peg.1692"/>
<dbReference type="eggNOG" id="COG0158">
    <property type="taxonomic scope" value="Bacteria"/>
</dbReference>
<dbReference type="HOGENOM" id="CLU_039977_1_0_7"/>
<dbReference type="InParanoid" id="Q74CM2"/>
<dbReference type="OrthoDB" id="9806756at2"/>
<dbReference type="UniPathway" id="UPA00138"/>
<dbReference type="Proteomes" id="UP000000577">
    <property type="component" value="Chromosome"/>
</dbReference>
<dbReference type="GO" id="GO:0005737">
    <property type="term" value="C:cytoplasm"/>
    <property type="evidence" value="ECO:0000318"/>
    <property type="project" value="GO_Central"/>
</dbReference>
<dbReference type="GO" id="GO:0005829">
    <property type="term" value="C:cytosol"/>
    <property type="evidence" value="ECO:0000318"/>
    <property type="project" value="GO_Central"/>
</dbReference>
<dbReference type="GO" id="GO:0042132">
    <property type="term" value="F:fructose 1,6-bisphosphate 1-phosphatase activity"/>
    <property type="evidence" value="ECO:0000318"/>
    <property type="project" value="GO_Central"/>
</dbReference>
<dbReference type="GO" id="GO:0000287">
    <property type="term" value="F:magnesium ion binding"/>
    <property type="evidence" value="ECO:0007669"/>
    <property type="project" value="UniProtKB-UniRule"/>
</dbReference>
<dbReference type="GO" id="GO:0030388">
    <property type="term" value="P:fructose 1,6-bisphosphate metabolic process"/>
    <property type="evidence" value="ECO:0000318"/>
    <property type="project" value="GO_Central"/>
</dbReference>
<dbReference type="GO" id="GO:0006002">
    <property type="term" value="P:fructose 6-phosphate metabolic process"/>
    <property type="evidence" value="ECO:0000318"/>
    <property type="project" value="GO_Central"/>
</dbReference>
<dbReference type="GO" id="GO:0006000">
    <property type="term" value="P:fructose metabolic process"/>
    <property type="evidence" value="ECO:0000318"/>
    <property type="project" value="GO_Central"/>
</dbReference>
<dbReference type="GO" id="GO:0006094">
    <property type="term" value="P:gluconeogenesis"/>
    <property type="evidence" value="ECO:0000318"/>
    <property type="project" value="GO_Central"/>
</dbReference>
<dbReference type="CDD" id="cd00354">
    <property type="entry name" value="FBPase"/>
    <property type="match status" value="1"/>
</dbReference>
<dbReference type="FunFam" id="3.30.540.10:FF:000050">
    <property type="entry name" value="Fructose-1,6-bisphosphatase class 1"/>
    <property type="match status" value="1"/>
</dbReference>
<dbReference type="Gene3D" id="3.40.190.80">
    <property type="match status" value="1"/>
</dbReference>
<dbReference type="Gene3D" id="3.30.540.10">
    <property type="entry name" value="Fructose-1,6-Bisphosphatase, subunit A, domain 1"/>
    <property type="match status" value="1"/>
</dbReference>
<dbReference type="HAMAP" id="MF_01855">
    <property type="entry name" value="FBPase_class1"/>
    <property type="match status" value="1"/>
</dbReference>
<dbReference type="InterPro" id="IPR044015">
    <property type="entry name" value="FBPase_C_dom"/>
</dbReference>
<dbReference type="InterPro" id="IPR000146">
    <property type="entry name" value="FBPase_class-1"/>
</dbReference>
<dbReference type="InterPro" id="IPR033391">
    <property type="entry name" value="FBPase_N"/>
</dbReference>
<dbReference type="InterPro" id="IPR028343">
    <property type="entry name" value="FBPtase"/>
</dbReference>
<dbReference type="InterPro" id="IPR020548">
    <property type="entry name" value="Fructose_bisphosphatase_AS"/>
</dbReference>
<dbReference type="InterPro" id="IPR023079">
    <property type="entry name" value="SBPase"/>
</dbReference>
<dbReference type="NCBIfam" id="NF006783">
    <property type="entry name" value="PRK09293.2-4"/>
    <property type="match status" value="1"/>
</dbReference>
<dbReference type="PANTHER" id="PTHR11556">
    <property type="entry name" value="FRUCTOSE-1,6-BISPHOSPHATASE-RELATED"/>
    <property type="match status" value="1"/>
</dbReference>
<dbReference type="PANTHER" id="PTHR11556:SF35">
    <property type="entry name" value="SEDOHEPTULOSE-1,7-BISPHOSPHATASE, CHLOROPLASTIC"/>
    <property type="match status" value="1"/>
</dbReference>
<dbReference type="Pfam" id="PF00316">
    <property type="entry name" value="FBPase"/>
    <property type="match status" value="1"/>
</dbReference>
<dbReference type="Pfam" id="PF18913">
    <property type="entry name" value="FBPase_C"/>
    <property type="match status" value="1"/>
</dbReference>
<dbReference type="PIRSF" id="PIRSF500210">
    <property type="entry name" value="FBPtase"/>
    <property type="match status" value="1"/>
</dbReference>
<dbReference type="PIRSF" id="PIRSF000904">
    <property type="entry name" value="FBPtase_SBPase"/>
    <property type="match status" value="1"/>
</dbReference>
<dbReference type="PRINTS" id="PR01958">
    <property type="entry name" value="S17BPHPHTASE"/>
</dbReference>
<dbReference type="SUPFAM" id="SSF56655">
    <property type="entry name" value="Carbohydrate phosphatase"/>
    <property type="match status" value="1"/>
</dbReference>
<dbReference type="PROSITE" id="PS00124">
    <property type="entry name" value="FBPASE"/>
    <property type="match status" value="1"/>
</dbReference>
<evidence type="ECO:0000255" key="1">
    <source>
        <dbReference type="HAMAP-Rule" id="MF_01855"/>
    </source>
</evidence>
<feature type="chain" id="PRO_0000364560" description="Fructose-1,6-bisphosphatase class 1">
    <location>
        <begin position="1"/>
        <end position="313"/>
    </location>
</feature>
<feature type="binding site" evidence="1">
    <location>
        <position position="91"/>
    </location>
    <ligand>
        <name>Mg(2+)</name>
        <dbReference type="ChEBI" id="CHEBI:18420"/>
        <label>1</label>
    </ligand>
</feature>
<feature type="binding site" evidence="1">
    <location>
        <position position="112"/>
    </location>
    <ligand>
        <name>Mg(2+)</name>
        <dbReference type="ChEBI" id="CHEBI:18420"/>
        <label>1</label>
    </ligand>
</feature>
<feature type="binding site" evidence="1">
    <location>
        <position position="112"/>
    </location>
    <ligand>
        <name>Mg(2+)</name>
        <dbReference type="ChEBI" id="CHEBI:18420"/>
        <label>2</label>
    </ligand>
</feature>
<feature type="binding site" evidence="1">
    <location>
        <position position="114"/>
    </location>
    <ligand>
        <name>Mg(2+)</name>
        <dbReference type="ChEBI" id="CHEBI:18420"/>
        <label>1</label>
    </ligand>
</feature>
<feature type="binding site" evidence="1">
    <location>
        <begin position="115"/>
        <end position="118"/>
    </location>
    <ligand>
        <name>substrate</name>
    </ligand>
</feature>
<feature type="binding site" evidence="1">
    <location>
        <position position="115"/>
    </location>
    <ligand>
        <name>Mg(2+)</name>
        <dbReference type="ChEBI" id="CHEBI:18420"/>
        <label>2</label>
    </ligand>
</feature>
<feature type="binding site" evidence="1">
    <location>
        <position position="223"/>
    </location>
    <ligand>
        <name>substrate</name>
    </ligand>
</feature>
<feature type="binding site" evidence="1">
    <location>
        <position position="254"/>
    </location>
    <ligand>
        <name>substrate</name>
    </ligand>
</feature>
<feature type="binding site" evidence="1">
    <location>
        <position position="260"/>
    </location>
    <ligand>
        <name>Mg(2+)</name>
        <dbReference type="ChEBI" id="CHEBI:18420"/>
        <label>2</label>
    </ligand>
</feature>
<proteinExistence type="inferred from homology"/>
<reference key="1">
    <citation type="journal article" date="2003" name="Science">
        <title>Genome of Geobacter sulfurreducens: metal reduction in subsurface environments.</title>
        <authorList>
            <person name="Methe B.A."/>
            <person name="Nelson K.E."/>
            <person name="Eisen J.A."/>
            <person name="Paulsen I.T."/>
            <person name="Nelson W.C."/>
            <person name="Heidelberg J.F."/>
            <person name="Wu D."/>
            <person name="Wu M."/>
            <person name="Ward N.L."/>
            <person name="Beanan M.J."/>
            <person name="Dodson R.J."/>
            <person name="Madupu R."/>
            <person name="Brinkac L.M."/>
            <person name="Daugherty S.C."/>
            <person name="DeBoy R.T."/>
            <person name="Durkin A.S."/>
            <person name="Gwinn M.L."/>
            <person name="Kolonay J.F."/>
            <person name="Sullivan S.A."/>
            <person name="Haft D.H."/>
            <person name="Selengut J."/>
            <person name="Davidsen T.M."/>
            <person name="Zafar N."/>
            <person name="White O."/>
            <person name="Tran B."/>
            <person name="Romero C."/>
            <person name="Forberger H.A."/>
            <person name="Weidman J.F."/>
            <person name="Khouri H.M."/>
            <person name="Feldblyum T.V."/>
            <person name="Utterback T.R."/>
            <person name="Van Aken S.E."/>
            <person name="Lovley D.R."/>
            <person name="Fraser C.M."/>
        </authorList>
    </citation>
    <scope>NUCLEOTIDE SEQUENCE [LARGE SCALE GENOMIC DNA]</scope>
    <source>
        <strain>ATCC 51573 / DSM 12127 / PCA</strain>
    </source>
</reference>
<organism>
    <name type="scientific">Geobacter sulfurreducens (strain ATCC 51573 / DSM 12127 / PCA)</name>
    <dbReference type="NCBI Taxonomy" id="243231"/>
    <lineage>
        <taxon>Bacteria</taxon>
        <taxon>Pseudomonadati</taxon>
        <taxon>Thermodesulfobacteriota</taxon>
        <taxon>Desulfuromonadia</taxon>
        <taxon>Geobacterales</taxon>
        <taxon>Geobacteraceae</taxon>
        <taxon>Geobacter</taxon>
    </lineage>
</organism>
<comment type="catalytic activity">
    <reaction evidence="1">
        <text>beta-D-fructose 1,6-bisphosphate + H2O = beta-D-fructose 6-phosphate + phosphate</text>
        <dbReference type="Rhea" id="RHEA:11064"/>
        <dbReference type="ChEBI" id="CHEBI:15377"/>
        <dbReference type="ChEBI" id="CHEBI:32966"/>
        <dbReference type="ChEBI" id="CHEBI:43474"/>
        <dbReference type="ChEBI" id="CHEBI:57634"/>
        <dbReference type="EC" id="3.1.3.11"/>
    </reaction>
</comment>
<comment type="cofactor">
    <cofactor evidence="1">
        <name>Mg(2+)</name>
        <dbReference type="ChEBI" id="CHEBI:18420"/>
    </cofactor>
    <text evidence="1">Binds 2 magnesium ions per subunit.</text>
</comment>
<comment type="pathway">
    <text evidence="1">Carbohydrate biosynthesis; gluconeogenesis.</text>
</comment>
<comment type="subunit">
    <text evidence="1">Homotetramer.</text>
</comment>
<comment type="subcellular location">
    <subcellularLocation>
        <location evidence="1">Cytoplasm</location>
    </subcellularLocation>
</comment>
<comment type="similarity">
    <text evidence="1">Belongs to the FBPase class 1 family.</text>
</comment>